<proteinExistence type="inferred from homology"/>
<accession>Q3SRB1</accession>
<feature type="chain" id="PRO_0000228293" description="Holo-[acyl-carrier-protein] synthase">
    <location>
        <begin position="1"/>
        <end position="139"/>
    </location>
</feature>
<feature type="binding site" evidence="1">
    <location>
        <position position="8"/>
    </location>
    <ligand>
        <name>Mg(2+)</name>
        <dbReference type="ChEBI" id="CHEBI:18420"/>
    </ligand>
</feature>
<feature type="binding site" evidence="1">
    <location>
        <position position="61"/>
    </location>
    <ligand>
        <name>Mg(2+)</name>
        <dbReference type="ChEBI" id="CHEBI:18420"/>
    </ligand>
</feature>
<name>ACPS_NITWN</name>
<reference key="1">
    <citation type="journal article" date="2006" name="Appl. Environ. Microbiol.">
        <title>Genome sequence of the chemolithoautotrophic nitrite-oxidizing bacterium Nitrobacter winogradskyi Nb-255.</title>
        <authorList>
            <person name="Starkenburg S.R."/>
            <person name="Chain P.S.G."/>
            <person name="Sayavedra-Soto L.A."/>
            <person name="Hauser L."/>
            <person name="Land M.L."/>
            <person name="Larimer F.W."/>
            <person name="Malfatti S.A."/>
            <person name="Klotz M.G."/>
            <person name="Bottomley P.J."/>
            <person name="Arp D.J."/>
            <person name="Hickey W.J."/>
        </authorList>
    </citation>
    <scope>NUCLEOTIDE SEQUENCE [LARGE SCALE GENOMIC DNA]</scope>
    <source>
        <strain>ATCC 25391 / DSM 10237 / CIP 104748 / NCIMB 11846 / Nb-255</strain>
    </source>
</reference>
<comment type="function">
    <text evidence="1">Transfers the 4'-phosphopantetheine moiety from coenzyme A to a Ser of acyl-carrier-protein.</text>
</comment>
<comment type="catalytic activity">
    <reaction evidence="1">
        <text>apo-[ACP] + CoA = holo-[ACP] + adenosine 3',5'-bisphosphate + H(+)</text>
        <dbReference type="Rhea" id="RHEA:12068"/>
        <dbReference type="Rhea" id="RHEA-COMP:9685"/>
        <dbReference type="Rhea" id="RHEA-COMP:9690"/>
        <dbReference type="ChEBI" id="CHEBI:15378"/>
        <dbReference type="ChEBI" id="CHEBI:29999"/>
        <dbReference type="ChEBI" id="CHEBI:57287"/>
        <dbReference type="ChEBI" id="CHEBI:58343"/>
        <dbReference type="ChEBI" id="CHEBI:64479"/>
        <dbReference type="EC" id="2.7.8.7"/>
    </reaction>
</comment>
<comment type="cofactor">
    <cofactor evidence="1">
        <name>Mg(2+)</name>
        <dbReference type="ChEBI" id="CHEBI:18420"/>
    </cofactor>
</comment>
<comment type="subcellular location">
    <subcellularLocation>
        <location evidence="1">Cytoplasm</location>
    </subcellularLocation>
</comment>
<comment type="similarity">
    <text evidence="1">Belongs to the P-Pant transferase superfamily. AcpS family.</text>
</comment>
<sequence length="139" mass="15275">MIIGIGSDLIDIRRVAKVIERHGDRFLNRVFTEIERAKAERRATNEKMVVSTYAKRFAAKEACAKALGTGIRQGVWWRDMGVVNLQAGQPSMMLTGGALKRLQLLTPPGLEVRIDVSLTDDWPLAQAFVIISAAAAGKL</sequence>
<evidence type="ECO:0000255" key="1">
    <source>
        <dbReference type="HAMAP-Rule" id="MF_00101"/>
    </source>
</evidence>
<dbReference type="EC" id="2.7.8.7" evidence="1"/>
<dbReference type="EMBL" id="CP000115">
    <property type="protein sequence ID" value="ABA05180.1"/>
    <property type="molecule type" value="Genomic_DNA"/>
</dbReference>
<dbReference type="RefSeq" id="WP_011315176.1">
    <property type="nucleotide sequence ID" value="NC_007406.1"/>
</dbReference>
<dbReference type="SMR" id="Q3SRB1"/>
<dbReference type="STRING" id="323098.Nwi_1920"/>
<dbReference type="KEGG" id="nwi:Nwi_1920"/>
<dbReference type="eggNOG" id="COG0736">
    <property type="taxonomic scope" value="Bacteria"/>
</dbReference>
<dbReference type="HOGENOM" id="CLU_089696_0_2_5"/>
<dbReference type="OrthoDB" id="517356at2"/>
<dbReference type="Proteomes" id="UP000002531">
    <property type="component" value="Chromosome"/>
</dbReference>
<dbReference type="GO" id="GO:0005737">
    <property type="term" value="C:cytoplasm"/>
    <property type="evidence" value="ECO:0007669"/>
    <property type="project" value="UniProtKB-SubCell"/>
</dbReference>
<dbReference type="GO" id="GO:0008897">
    <property type="term" value="F:holo-[acyl-carrier-protein] synthase activity"/>
    <property type="evidence" value="ECO:0007669"/>
    <property type="project" value="UniProtKB-UniRule"/>
</dbReference>
<dbReference type="GO" id="GO:0000287">
    <property type="term" value="F:magnesium ion binding"/>
    <property type="evidence" value="ECO:0007669"/>
    <property type="project" value="UniProtKB-UniRule"/>
</dbReference>
<dbReference type="GO" id="GO:0006633">
    <property type="term" value="P:fatty acid biosynthetic process"/>
    <property type="evidence" value="ECO:0007669"/>
    <property type="project" value="UniProtKB-UniRule"/>
</dbReference>
<dbReference type="Gene3D" id="3.90.470.20">
    <property type="entry name" value="4'-phosphopantetheinyl transferase domain"/>
    <property type="match status" value="1"/>
</dbReference>
<dbReference type="HAMAP" id="MF_00101">
    <property type="entry name" value="AcpS"/>
    <property type="match status" value="1"/>
</dbReference>
<dbReference type="InterPro" id="IPR008278">
    <property type="entry name" value="4-PPantetheinyl_Trfase_dom"/>
</dbReference>
<dbReference type="InterPro" id="IPR037143">
    <property type="entry name" value="4-PPantetheinyl_Trfase_dom_sf"/>
</dbReference>
<dbReference type="InterPro" id="IPR002582">
    <property type="entry name" value="ACPS"/>
</dbReference>
<dbReference type="InterPro" id="IPR004568">
    <property type="entry name" value="Ppantetheine-prot_Trfase_dom"/>
</dbReference>
<dbReference type="NCBIfam" id="TIGR00516">
    <property type="entry name" value="acpS"/>
    <property type="match status" value="1"/>
</dbReference>
<dbReference type="NCBIfam" id="TIGR00556">
    <property type="entry name" value="pantethn_trn"/>
    <property type="match status" value="1"/>
</dbReference>
<dbReference type="Pfam" id="PF01648">
    <property type="entry name" value="ACPS"/>
    <property type="match status" value="1"/>
</dbReference>
<dbReference type="SUPFAM" id="SSF56214">
    <property type="entry name" value="4'-phosphopantetheinyl transferase"/>
    <property type="match status" value="1"/>
</dbReference>
<organism>
    <name type="scientific">Nitrobacter winogradskyi (strain ATCC 25391 / DSM 10237 / CIP 104748 / NCIMB 11846 / Nb-255)</name>
    <dbReference type="NCBI Taxonomy" id="323098"/>
    <lineage>
        <taxon>Bacteria</taxon>
        <taxon>Pseudomonadati</taxon>
        <taxon>Pseudomonadota</taxon>
        <taxon>Alphaproteobacteria</taxon>
        <taxon>Hyphomicrobiales</taxon>
        <taxon>Nitrobacteraceae</taxon>
        <taxon>Nitrobacter</taxon>
    </lineage>
</organism>
<protein>
    <recommendedName>
        <fullName evidence="1">Holo-[acyl-carrier-protein] synthase</fullName>
        <shortName evidence="1">Holo-ACP synthase</shortName>
        <ecNumber evidence="1">2.7.8.7</ecNumber>
    </recommendedName>
    <alternativeName>
        <fullName evidence="1">4'-phosphopantetheinyl transferase AcpS</fullName>
    </alternativeName>
</protein>
<keyword id="KW-0963">Cytoplasm</keyword>
<keyword id="KW-0275">Fatty acid biosynthesis</keyword>
<keyword id="KW-0276">Fatty acid metabolism</keyword>
<keyword id="KW-0444">Lipid biosynthesis</keyword>
<keyword id="KW-0443">Lipid metabolism</keyword>
<keyword id="KW-0460">Magnesium</keyword>
<keyword id="KW-0479">Metal-binding</keyword>
<keyword id="KW-1185">Reference proteome</keyword>
<keyword id="KW-0808">Transferase</keyword>
<gene>
    <name evidence="1" type="primary">acpS</name>
    <name type="ordered locus">Nwi_1920</name>
</gene>